<protein>
    <recommendedName>
        <fullName evidence="1">UPF0301 protein Rfer_1377</fullName>
    </recommendedName>
</protein>
<reference key="1">
    <citation type="submission" date="2006-02" db="EMBL/GenBank/DDBJ databases">
        <title>Complete sequence of chromosome of Rhodoferax ferrireducens DSM 15236.</title>
        <authorList>
            <person name="Copeland A."/>
            <person name="Lucas S."/>
            <person name="Lapidus A."/>
            <person name="Barry K."/>
            <person name="Detter J.C."/>
            <person name="Glavina del Rio T."/>
            <person name="Hammon N."/>
            <person name="Israni S."/>
            <person name="Pitluck S."/>
            <person name="Brettin T."/>
            <person name="Bruce D."/>
            <person name="Han C."/>
            <person name="Tapia R."/>
            <person name="Gilna P."/>
            <person name="Kiss H."/>
            <person name="Schmutz J."/>
            <person name="Larimer F."/>
            <person name="Land M."/>
            <person name="Kyrpides N."/>
            <person name="Ivanova N."/>
            <person name="Richardson P."/>
        </authorList>
    </citation>
    <scope>NUCLEOTIDE SEQUENCE [LARGE SCALE GENOMIC DNA]</scope>
    <source>
        <strain>ATCC BAA-621 / DSM 15236 / T118</strain>
    </source>
</reference>
<sequence length="199" mass="21597">MPADFALTNLTNHFLIAMPGLQDEIFSRSVVYVCEHSQRGALGLVINKPCDIDMKRLFEKVELPMCRADLSNTPVFLGGPVQTERGFVLHEATFADADKPAESVYASTMVIPGGLEMTTSKDVLEAISIGAGPRKVLVSLGYAAWGEGQLESEISENSWLTVAANNSVIFDTPVAQRYEQALLLLGLELWMLSPDAGHA</sequence>
<proteinExistence type="inferred from homology"/>
<feature type="chain" id="PRO_0000258868" description="UPF0301 protein Rfer_1377">
    <location>
        <begin position="1"/>
        <end position="199"/>
    </location>
</feature>
<accession>Q21YP2</accession>
<evidence type="ECO:0000255" key="1">
    <source>
        <dbReference type="HAMAP-Rule" id="MF_00758"/>
    </source>
</evidence>
<evidence type="ECO:0000305" key="2"/>
<comment type="similarity">
    <text evidence="1">Belongs to the UPF0301 (AlgH) family.</text>
</comment>
<comment type="sequence caution" evidence="2">
    <conflict type="erroneous initiation">
        <sequence resource="EMBL-CDS" id="ABD69111"/>
    </conflict>
</comment>
<keyword id="KW-1185">Reference proteome</keyword>
<name>Y1377_ALBFT</name>
<dbReference type="EMBL" id="CP000267">
    <property type="protein sequence ID" value="ABD69111.1"/>
    <property type="status" value="ALT_INIT"/>
    <property type="molecule type" value="Genomic_DNA"/>
</dbReference>
<dbReference type="RefSeq" id="WP_041790326.1">
    <property type="nucleotide sequence ID" value="NC_007908.1"/>
</dbReference>
<dbReference type="SMR" id="Q21YP2"/>
<dbReference type="STRING" id="338969.Rfer_1377"/>
<dbReference type="KEGG" id="rfr:Rfer_1377"/>
<dbReference type="eggNOG" id="COG1678">
    <property type="taxonomic scope" value="Bacteria"/>
</dbReference>
<dbReference type="HOGENOM" id="CLU_057596_1_0_4"/>
<dbReference type="OrthoDB" id="9807486at2"/>
<dbReference type="Proteomes" id="UP000008332">
    <property type="component" value="Chromosome"/>
</dbReference>
<dbReference type="GO" id="GO:0005829">
    <property type="term" value="C:cytosol"/>
    <property type="evidence" value="ECO:0007669"/>
    <property type="project" value="TreeGrafter"/>
</dbReference>
<dbReference type="Gene3D" id="3.40.1740.10">
    <property type="entry name" value="VC0467-like"/>
    <property type="match status" value="1"/>
</dbReference>
<dbReference type="HAMAP" id="MF_00758">
    <property type="entry name" value="UPF0301"/>
    <property type="match status" value="1"/>
</dbReference>
<dbReference type="InterPro" id="IPR003774">
    <property type="entry name" value="AlgH-like"/>
</dbReference>
<dbReference type="NCBIfam" id="NF001266">
    <property type="entry name" value="PRK00228.1-1"/>
    <property type="match status" value="1"/>
</dbReference>
<dbReference type="PANTHER" id="PTHR30327">
    <property type="entry name" value="UNCHARACTERIZED PROTEIN YQGE"/>
    <property type="match status" value="1"/>
</dbReference>
<dbReference type="PANTHER" id="PTHR30327:SF1">
    <property type="entry name" value="UPF0301 PROTEIN YQGE"/>
    <property type="match status" value="1"/>
</dbReference>
<dbReference type="Pfam" id="PF02622">
    <property type="entry name" value="DUF179"/>
    <property type="match status" value="1"/>
</dbReference>
<dbReference type="SUPFAM" id="SSF143456">
    <property type="entry name" value="VC0467-like"/>
    <property type="match status" value="1"/>
</dbReference>
<gene>
    <name type="ordered locus">Rfer_1377</name>
</gene>
<organism>
    <name type="scientific">Albidiferax ferrireducens (strain ATCC BAA-621 / DSM 15236 / T118)</name>
    <name type="common">Rhodoferax ferrireducens</name>
    <dbReference type="NCBI Taxonomy" id="338969"/>
    <lineage>
        <taxon>Bacteria</taxon>
        <taxon>Pseudomonadati</taxon>
        <taxon>Pseudomonadota</taxon>
        <taxon>Betaproteobacteria</taxon>
        <taxon>Burkholderiales</taxon>
        <taxon>Comamonadaceae</taxon>
        <taxon>Rhodoferax</taxon>
    </lineage>
</organism>